<feature type="chain" id="PRO_0000225287" description="DNA-directed RNA polymerase subunit alpha">
    <location>
        <begin position="1"/>
        <end position="342"/>
    </location>
</feature>
<feature type="region of interest" description="Alpha N-terminal domain (alpha-NTD)" evidence="1">
    <location>
        <begin position="1"/>
        <end position="238"/>
    </location>
</feature>
<feature type="region of interest" description="Alpha C-terminal domain (alpha-CTD)" evidence="1">
    <location>
        <begin position="254"/>
        <end position="342"/>
    </location>
</feature>
<keyword id="KW-0240">DNA-directed RNA polymerase</keyword>
<keyword id="KW-0548">Nucleotidyltransferase</keyword>
<keyword id="KW-1185">Reference proteome</keyword>
<keyword id="KW-0804">Transcription</keyword>
<keyword id="KW-0808">Transferase</keyword>
<sequence length="342" mass="37814">MESLNVNAKNWKALIKPAQLDVKISDDKSHAKIIAEPLEKGYGLTLGNSLRRILLSSIRGAAVTSIQIDGVLHEFTSIKGVREDVTDIVLNVKSLALKSSSETTKKLILDAKGPGEIKASDIAPVADIEILNPDLVICNLDENTHFHMEMNVGTGKGYVPAVMNKPEEPPLGLIAIDSLYSPVKKVSYSISTAREGKALDYDKLIMEVETNGSISAEDAVAYSARIFQDQLNMFVNFDEPVEVPVKEVSSEPEFNKNLLRKVDELELSVRSMNCLKNDNIIYIGDLVQKSEGEMLRTPNFGRKSLNEIKEVLTGMSLYLGMEIPNWPPENIAEMSKKLEEQI</sequence>
<name>RPOA_PELUB</name>
<protein>
    <recommendedName>
        <fullName evidence="1">DNA-directed RNA polymerase subunit alpha</fullName>
        <shortName evidence="1">RNAP subunit alpha</shortName>
        <ecNumber evidence="1">2.7.7.6</ecNumber>
    </recommendedName>
    <alternativeName>
        <fullName evidence="1">RNA polymerase subunit alpha</fullName>
    </alternativeName>
    <alternativeName>
        <fullName evidence="1">Transcriptase subunit alpha</fullName>
    </alternativeName>
</protein>
<dbReference type="EC" id="2.7.7.6" evidence="1"/>
<dbReference type="EMBL" id="CP000084">
    <property type="protein sequence ID" value="AAZ21897.1"/>
    <property type="molecule type" value="Genomic_DNA"/>
</dbReference>
<dbReference type="RefSeq" id="WP_006996834.1">
    <property type="nucleotide sequence ID" value="NC_007205.1"/>
</dbReference>
<dbReference type="SMR" id="Q4FLP1"/>
<dbReference type="STRING" id="335992.SAR11_1093"/>
<dbReference type="GeneID" id="66295583"/>
<dbReference type="KEGG" id="pub:SAR11_1093"/>
<dbReference type="eggNOG" id="COG0202">
    <property type="taxonomic scope" value="Bacteria"/>
</dbReference>
<dbReference type="HOGENOM" id="CLU_053084_0_0_5"/>
<dbReference type="OrthoDB" id="9805706at2"/>
<dbReference type="Proteomes" id="UP000002528">
    <property type="component" value="Chromosome"/>
</dbReference>
<dbReference type="GO" id="GO:0005737">
    <property type="term" value="C:cytoplasm"/>
    <property type="evidence" value="ECO:0007669"/>
    <property type="project" value="UniProtKB-ARBA"/>
</dbReference>
<dbReference type="GO" id="GO:0000428">
    <property type="term" value="C:DNA-directed RNA polymerase complex"/>
    <property type="evidence" value="ECO:0007669"/>
    <property type="project" value="UniProtKB-KW"/>
</dbReference>
<dbReference type="GO" id="GO:0003677">
    <property type="term" value="F:DNA binding"/>
    <property type="evidence" value="ECO:0007669"/>
    <property type="project" value="UniProtKB-UniRule"/>
</dbReference>
<dbReference type="GO" id="GO:0003899">
    <property type="term" value="F:DNA-directed RNA polymerase activity"/>
    <property type="evidence" value="ECO:0007669"/>
    <property type="project" value="UniProtKB-UniRule"/>
</dbReference>
<dbReference type="GO" id="GO:0046983">
    <property type="term" value="F:protein dimerization activity"/>
    <property type="evidence" value="ECO:0007669"/>
    <property type="project" value="InterPro"/>
</dbReference>
<dbReference type="GO" id="GO:0006351">
    <property type="term" value="P:DNA-templated transcription"/>
    <property type="evidence" value="ECO:0007669"/>
    <property type="project" value="UniProtKB-UniRule"/>
</dbReference>
<dbReference type="CDD" id="cd06928">
    <property type="entry name" value="RNAP_alpha_NTD"/>
    <property type="match status" value="1"/>
</dbReference>
<dbReference type="FunFam" id="1.10.150.20:FF:000001">
    <property type="entry name" value="DNA-directed RNA polymerase subunit alpha"/>
    <property type="match status" value="1"/>
</dbReference>
<dbReference type="FunFam" id="2.170.120.12:FF:000001">
    <property type="entry name" value="DNA-directed RNA polymerase subunit alpha"/>
    <property type="match status" value="1"/>
</dbReference>
<dbReference type="Gene3D" id="1.10.150.20">
    <property type="entry name" value="5' to 3' exonuclease, C-terminal subdomain"/>
    <property type="match status" value="1"/>
</dbReference>
<dbReference type="Gene3D" id="2.170.120.12">
    <property type="entry name" value="DNA-directed RNA polymerase, insert domain"/>
    <property type="match status" value="1"/>
</dbReference>
<dbReference type="Gene3D" id="3.30.1360.10">
    <property type="entry name" value="RNA polymerase, RBP11-like subunit"/>
    <property type="match status" value="1"/>
</dbReference>
<dbReference type="HAMAP" id="MF_00059">
    <property type="entry name" value="RNApol_bact_RpoA"/>
    <property type="match status" value="1"/>
</dbReference>
<dbReference type="InterPro" id="IPR011262">
    <property type="entry name" value="DNA-dir_RNA_pol_insert"/>
</dbReference>
<dbReference type="InterPro" id="IPR011263">
    <property type="entry name" value="DNA-dir_RNA_pol_RpoA/D/Rpb3"/>
</dbReference>
<dbReference type="InterPro" id="IPR011773">
    <property type="entry name" value="DNA-dir_RpoA"/>
</dbReference>
<dbReference type="InterPro" id="IPR036603">
    <property type="entry name" value="RBP11-like"/>
</dbReference>
<dbReference type="InterPro" id="IPR011260">
    <property type="entry name" value="RNAP_asu_C"/>
</dbReference>
<dbReference type="InterPro" id="IPR036643">
    <property type="entry name" value="RNApol_insert_sf"/>
</dbReference>
<dbReference type="NCBIfam" id="NF003513">
    <property type="entry name" value="PRK05182.1-2"/>
    <property type="match status" value="1"/>
</dbReference>
<dbReference type="NCBIfam" id="NF003519">
    <property type="entry name" value="PRK05182.2-5"/>
    <property type="match status" value="1"/>
</dbReference>
<dbReference type="NCBIfam" id="TIGR02027">
    <property type="entry name" value="rpoA"/>
    <property type="match status" value="1"/>
</dbReference>
<dbReference type="Pfam" id="PF01000">
    <property type="entry name" value="RNA_pol_A_bac"/>
    <property type="match status" value="1"/>
</dbReference>
<dbReference type="Pfam" id="PF03118">
    <property type="entry name" value="RNA_pol_A_CTD"/>
    <property type="match status" value="1"/>
</dbReference>
<dbReference type="Pfam" id="PF01193">
    <property type="entry name" value="RNA_pol_L"/>
    <property type="match status" value="1"/>
</dbReference>
<dbReference type="SMART" id="SM00662">
    <property type="entry name" value="RPOLD"/>
    <property type="match status" value="1"/>
</dbReference>
<dbReference type="SUPFAM" id="SSF47789">
    <property type="entry name" value="C-terminal domain of RNA polymerase alpha subunit"/>
    <property type="match status" value="1"/>
</dbReference>
<dbReference type="SUPFAM" id="SSF56553">
    <property type="entry name" value="Insert subdomain of RNA polymerase alpha subunit"/>
    <property type="match status" value="1"/>
</dbReference>
<dbReference type="SUPFAM" id="SSF55257">
    <property type="entry name" value="RBP11-like subunits of RNA polymerase"/>
    <property type="match status" value="1"/>
</dbReference>
<evidence type="ECO:0000255" key="1">
    <source>
        <dbReference type="HAMAP-Rule" id="MF_00059"/>
    </source>
</evidence>
<proteinExistence type="inferred from homology"/>
<accession>Q4FLP1</accession>
<gene>
    <name evidence="1" type="primary">rpoA</name>
    <name type="ordered locus">SAR11_1093</name>
</gene>
<reference key="1">
    <citation type="journal article" date="2005" name="Science">
        <title>Genome streamlining in a cosmopolitan oceanic bacterium.</title>
        <authorList>
            <person name="Giovannoni S.J."/>
            <person name="Tripp H.J."/>
            <person name="Givan S."/>
            <person name="Podar M."/>
            <person name="Vergin K.L."/>
            <person name="Baptista D."/>
            <person name="Bibbs L."/>
            <person name="Eads J."/>
            <person name="Richardson T.H."/>
            <person name="Noordewier M."/>
            <person name="Rappe M.S."/>
            <person name="Short J.M."/>
            <person name="Carrington J.C."/>
            <person name="Mathur E.J."/>
        </authorList>
    </citation>
    <scope>NUCLEOTIDE SEQUENCE [LARGE SCALE GENOMIC DNA]</scope>
    <source>
        <strain>HTCC1062</strain>
    </source>
</reference>
<organism>
    <name type="scientific">Pelagibacter ubique (strain HTCC1062)</name>
    <dbReference type="NCBI Taxonomy" id="335992"/>
    <lineage>
        <taxon>Bacteria</taxon>
        <taxon>Pseudomonadati</taxon>
        <taxon>Pseudomonadota</taxon>
        <taxon>Alphaproteobacteria</taxon>
        <taxon>Candidatus Pelagibacterales</taxon>
        <taxon>Candidatus Pelagibacteraceae</taxon>
        <taxon>Candidatus Pelagibacter</taxon>
    </lineage>
</organism>
<comment type="function">
    <text evidence="1">DNA-dependent RNA polymerase catalyzes the transcription of DNA into RNA using the four ribonucleoside triphosphates as substrates.</text>
</comment>
<comment type="catalytic activity">
    <reaction evidence="1">
        <text>RNA(n) + a ribonucleoside 5'-triphosphate = RNA(n+1) + diphosphate</text>
        <dbReference type="Rhea" id="RHEA:21248"/>
        <dbReference type="Rhea" id="RHEA-COMP:14527"/>
        <dbReference type="Rhea" id="RHEA-COMP:17342"/>
        <dbReference type="ChEBI" id="CHEBI:33019"/>
        <dbReference type="ChEBI" id="CHEBI:61557"/>
        <dbReference type="ChEBI" id="CHEBI:140395"/>
        <dbReference type="EC" id="2.7.7.6"/>
    </reaction>
</comment>
<comment type="subunit">
    <text evidence="1">Homodimer. The RNAP catalytic core consists of 2 alpha, 1 beta, 1 beta' and 1 omega subunit. When a sigma factor is associated with the core the holoenzyme is formed, which can initiate transcription.</text>
</comment>
<comment type="domain">
    <text evidence="1">The N-terminal domain is essential for RNAP assembly and basal transcription, whereas the C-terminal domain is involved in interaction with transcriptional regulators and with upstream promoter elements.</text>
</comment>
<comment type="similarity">
    <text evidence="1">Belongs to the RNA polymerase alpha chain family.</text>
</comment>